<organismHost>
    <name type="scientific">Bos taurus</name>
    <name type="common">Bovine</name>
    <dbReference type="NCBI Taxonomy" id="9913"/>
</organismHost>
<organismHost>
    <name type="scientific">Ovis aries</name>
    <name type="common">Sheep</name>
    <dbReference type="NCBI Taxonomy" id="9940"/>
</organismHost>
<comment type="function">
    <text evidence="1 2">Plays a role in the inhibition of the host immune response by interfering with the production of interferon in infected cells (PubMed:23326235). Induces host nucleolar disorganization and host POLR2A/RPB1 degradation leading to host transcriptional shutoff (PubMed:27795408).</text>
</comment>
<comment type="subcellular location">
    <subcellularLocation>
        <location evidence="2">Host nucleus</location>
        <location evidence="2">Host nucleolus</location>
    </subcellularLocation>
</comment>
<comment type="similarity">
    <text evidence="3">Belongs to the orthobunyavirus NS-S protein family.</text>
</comment>
<accession>P0DXN0</accession>
<accession>H2AM14</accession>
<name>NSS_SBV</name>
<evidence type="ECO:0000269" key="1">
    <source>
    </source>
</evidence>
<evidence type="ECO:0000269" key="2">
    <source>
    </source>
</evidence>
<evidence type="ECO:0000305" key="3"/>
<protein>
    <recommendedName>
        <fullName>Non-structural protein NS-S</fullName>
    </recommendedName>
</protein>
<reference key="1">
    <citation type="journal article" date="2013" name="J. Gen. Virol.">
        <title>In vivo and in vitro identification of a hypervariable region in Schmallenberg virus.</title>
        <authorList>
            <person name="Coupeau D."/>
            <person name="Claine F."/>
            <person name="Wiggers L."/>
            <person name="Kirschvink N."/>
            <person name="Muylkens B."/>
        </authorList>
    </citation>
    <scope>NUCLEOTIDE SEQUENCE [GENOMIC RNA]</scope>
    <source>
        <strain>Isolate Na2-BHK21-P10</strain>
        <strain>isolate Na2-BHK21-P2</strain>
        <strain>Isolate Na2-CNS</strain>
    </source>
</reference>
<reference key="2">
    <citation type="journal article" date="2013" name="PLoS Pathog.">
        <title>Schmallenberg virus pathogenesis, tropism and interaction with the innate immune system of the host.</title>
        <authorList>
            <person name="Varela M."/>
            <person name="Schnettler E."/>
            <person name="Caporale M."/>
            <person name="Murgia C."/>
            <person name="Barry G."/>
            <person name="McFarlane M."/>
            <person name="McGregor E."/>
            <person name="Piras I.M."/>
            <person name="Shaw A."/>
            <person name="Lamm C."/>
            <person name="Janowicz A."/>
            <person name="Beer M."/>
            <person name="Glass M."/>
            <person name="Herder V."/>
            <person name="Hahn K."/>
            <person name="Baumgartner W."/>
            <person name="Kohl A."/>
            <person name="Palmarini M."/>
        </authorList>
    </citation>
    <scope>NUCLEOTIDE SEQUENCE [GENOMIC RNA]</scope>
    <scope>FUNCTION</scope>
    <source>
        <strain>Germany</strain>
    </source>
</reference>
<reference key="3">
    <citation type="journal article" date="2017" name="J. Virol.">
        <title>Nonstructural Protein NSs of Schmallenberg Virus Is Targeted to the Nucleolus and Induces Nucleolar Disorganization.</title>
        <authorList>
            <person name="Gouzil J."/>
            <person name="Fablet A."/>
            <person name="Lara E."/>
            <person name="Caignard G."/>
            <person name="Cochet M."/>
            <person name="Kundlacz C."/>
            <person name="Palmarini M."/>
            <person name="Varela M."/>
            <person name="Breard E."/>
            <person name="Sailleau C."/>
            <person name="Viarouge C."/>
            <person name="Coulpier M."/>
            <person name="Zientara S."/>
            <person name="Vitour D."/>
        </authorList>
    </citation>
    <scope>FUNCTION</scope>
    <scope>SUBCELLULAR LOCATION</scope>
</reference>
<organism>
    <name type="scientific">Schmallenberg virus</name>
    <name type="common">SBV</name>
    <dbReference type="NCBI Taxonomy" id="1133363"/>
    <lineage>
        <taxon>Viruses</taxon>
        <taxon>Riboviria</taxon>
        <taxon>Orthornavirae</taxon>
        <taxon>Negarnaviricota</taxon>
        <taxon>Polyploviricotina</taxon>
        <taxon>Ellioviricetes</taxon>
        <taxon>Bunyavirales</taxon>
        <taxon>Peribunyaviridae</taxon>
        <taxon>Orthobunyavirus</taxon>
        <taxon>Orthobunyavirus schmallenbergense</taxon>
    </lineage>
</organism>
<proteinExistence type="inferred from homology"/>
<feature type="chain" id="PRO_0000461180" description="Non-structural protein NS-S">
    <location>
        <begin position="1"/>
        <end position="91"/>
    </location>
</feature>
<feature type="region of interest" description="Nucleolar localization signal" evidence="2">
    <location>
        <begin position="33"/>
        <end position="51"/>
    </location>
</feature>
<keyword id="KW-1190">Host gene expression shutoff by virus</keyword>
<keyword id="KW-1048">Host nucleus</keyword>
<keyword id="KW-0945">Host-virus interaction</keyword>
<gene>
    <name type="primary">N</name>
</gene>
<dbReference type="EMBL" id="JX853181">
    <property type="protein sequence ID" value="AGC84163.1"/>
    <property type="molecule type" value="Viral_cRNA"/>
</dbReference>
<dbReference type="EMBL" id="KC139379">
    <property type="protein sequence ID" value="AGD94637.1"/>
    <property type="molecule type" value="Viral_cRNA"/>
</dbReference>
<dbReference type="EMBL" id="KC139380">
    <property type="protein sequence ID" value="AGD94639.1"/>
    <property type="molecule type" value="Viral_cRNA"/>
</dbReference>
<dbReference type="EMBL" id="KC139381">
    <property type="protein sequence ID" value="AGD94641.1"/>
    <property type="molecule type" value="Viral_cRNA"/>
</dbReference>
<dbReference type="Proteomes" id="UP000096935">
    <property type="component" value="Genome"/>
</dbReference>
<dbReference type="GO" id="GO:0044196">
    <property type="term" value="C:host cell nucleolus"/>
    <property type="evidence" value="ECO:0007669"/>
    <property type="project" value="UniProtKB-SubCell"/>
</dbReference>
<dbReference type="GO" id="GO:0039657">
    <property type="term" value="P:symbiont-mediated suppression of host gene expression"/>
    <property type="evidence" value="ECO:0007669"/>
    <property type="project" value="UniProtKB-KW"/>
</dbReference>
<dbReference type="GO" id="GO:0016032">
    <property type="term" value="P:viral process"/>
    <property type="evidence" value="ECO:0007669"/>
    <property type="project" value="InterPro"/>
</dbReference>
<dbReference type="InterPro" id="IPR000797">
    <property type="entry name" value="Bunya_NSs"/>
</dbReference>
<dbReference type="Pfam" id="PF01104">
    <property type="entry name" value="Bunya_NS-S"/>
    <property type="match status" value="1"/>
</dbReference>
<dbReference type="PIRSF" id="PIRSF003954">
    <property type="entry name" value="NS-S_OrthobunV"/>
    <property type="match status" value="1"/>
</dbReference>
<sequence length="91" mass="10598">MYHNGMQLHLTRRSGMWHLLVSMGNNSTSVLLESSSSTRRRPRWSYIRRHNQVSILLLVGSNLQWLITIFPNMSQILCQTMPLHFTGCQDI</sequence>